<feature type="chain" id="PRO_1000123930" description="Probable protein kinase UbiB">
    <location>
        <begin position="1"/>
        <end position="544"/>
    </location>
</feature>
<feature type="transmembrane region" description="Helical" evidence="1">
    <location>
        <begin position="515"/>
        <end position="537"/>
    </location>
</feature>
<feature type="domain" description="Protein kinase" evidence="1">
    <location>
        <begin position="123"/>
        <end position="501"/>
    </location>
</feature>
<feature type="active site" description="Proton acceptor" evidence="1">
    <location>
        <position position="287"/>
    </location>
</feature>
<feature type="binding site" evidence="1">
    <location>
        <begin position="129"/>
        <end position="137"/>
    </location>
    <ligand>
        <name>ATP</name>
        <dbReference type="ChEBI" id="CHEBI:30616"/>
    </ligand>
</feature>
<feature type="binding site" evidence="1">
    <location>
        <position position="152"/>
    </location>
    <ligand>
        <name>ATP</name>
        <dbReference type="ChEBI" id="CHEBI:30616"/>
    </ligand>
</feature>
<accession>B5FF80</accession>
<organism>
    <name type="scientific">Aliivibrio fischeri (strain MJ11)</name>
    <name type="common">Vibrio fischeri</name>
    <dbReference type="NCBI Taxonomy" id="388396"/>
    <lineage>
        <taxon>Bacteria</taxon>
        <taxon>Pseudomonadati</taxon>
        <taxon>Pseudomonadota</taxon>
        <taxon>Gammaproteobacteria</taxon>
        <taxon>Vibrionales</taxon>
        <taxon>Vibrionaceae</taxon>
        <taxon>Aliivibrio</taxon>
    </lineage>
</organism>
<sequence>MTPSELKRLYHITKVQLEYGLDELLPEHALTQLPKRLRKGLFWIKNKYPEKPLGERLRLALQELGPVWIKFGQMMSTRRDLFPPHLADQLALLQDQVAPFDGQLAKDQMEMELGGPLDNWFTDFDIKPLASASIAQVHTAKLKDSGREIVLKVIRPDIRPVIESDIRLMYRMARLVEQHIPEARRLKPVEVIEEYEKTLLDELDLRREASNAMQLRRNFEGSEELYVPEVILDLSSEHLMVSERIYGIQVSDIEQLEKNGTNMKLLAERGVSVFFTQVFRDSFFHADMHPGNVFVNPDNPENPQWIGLDCGIVGTLNKEDKRYLAENLLGFFNSDYHKVAQLHVDSGWVPADTNVEEFEFAIRMVCEPIFAKPLGEISFGHVLLNLFNTARRFNMEVQPQLVLLQKTLLYVEGLGRQLYPQLDLWATAKPFLETWMAKQVGPAAFVTALSEKAPFWAEKLPELPDLVYDSLRQGKVLNQRMDKLYAGYRQSKRQQAKGQFLFNVGATLLICSAVLLTSNITVLASISAATGAAFWLFSWRAYRR</sequence>
<gene>
    <name evidence="1" type="primary">ubiB</name>
    <name type="ordered locus">VFMJ11_0047</name>
</gene>
<name>UBIB_ALIFM</name>
<keyword id="KW-0067">ATP-binding</keyword>
<keyword id="KW-0997">Cell inner membrane</keyword>
<keyword id="KW-1003">Cell membrane</keyword>
<keyword id="KW-0418">Kinase</keyword>
<keyword id="KW-0472">Membrane</keyword>
<keyword id="KW-0547">Nucleotide-binding</keyword>
<keyword id="KW-0808">Transferase</keyword>
<keyword id="KW-0812">Transmembrane</keyword>
<keyword id="KW-1133">Transmembrane helix</keyword>
<keyword id="KW-0831">Ubiquinone biosynthesis</keyword>
<dbReference type="EC" id="2.7.-.-" evidence="1"/>
<dbReference type="EMBL" id="CP001139">
    <property type="protein sequence ID" value="ACH65144.1"/>
    <property type="molecule type" value="Genomic_DNA"/>
</dbReference>
<dbReference type="RefSeq" id="WP_012532847.1">
    <property type="nucleotide sequence ID" value="NC_011184.1"/>
</dbReference>
<dbReference type="SMR" id="B5FF80"/>
<dbReference type="KEGG" id="vfm:VFMJ11_0047"/>
<dbReference type="HOGENOM" id="CLU_006533_0_0_6"/>
<dbReference type="UniPathway" id="UPA00232"/>
<dbReference type="Proteomes" id="UP000001857">
    <property type="component" value="Chromosome I"/>
</dbReference>
<dbReference type="GO" id="GO:0005886">
    <property type="term" value="C:plasma membrane"/>
    <property type="evidence" value="ECO:0007669"/>
    <property type="project" value="UniProtKB-SubCell"/>
</dbReference>
<dbReference type="GO" id="GO:0005524">
    <property type="term" value="F:ATP binding"/>
    <property type="evidence" value="ECO:0007669"/>
    <property type="project" value="UniProtKB-KW"/>
</dbReference>
<dbReference type="GO" id="GO:0004672">
    <property type="term" value="F:protein kinase activity"/>
    <property type="evidence" value="ECO:0007669"/>
    <property type="project" value="UniProtKB-UniRule"/>
</dbReference>
<dbReference type="GO" id="GO:0010795">
    <property type="term" value="P:regulation of ubiquinone biosynthetic process"/>
    <property type="evidence" value="ECO:0007669"/>
    <property type="project" value="UniProtKB-UniRule"/>
</dbReference>
<dbReference type="GO" id="GO:0006744">
    <property type="term" value="P:ubiquinone biosynthetic process"/>
    <property type="evidence" value="ECO:0007669"/>
    <property type="project" value="UniProtKB-UniPathway"/>
</dbReference>
<dbReference type="CDD" id="cd13972">
    <property type="entry name" value="UbiB"/>
    <property type="match status" value="1"/>
</dbReference>
<dbReference type="HAMAP" id="MF_00414">
    <property type="entry name" value="UbiB"/>
    <property type="match status" value="1"/>
</dbReference>
<dbReference type="InterPro" id="IPR004147">
    <property type="entry name" value="ABC1_dom"/>
</dbReference>
<dbReference type="InterPro" id="IPR011009">
    <property type="entry name" value="Kinase-like_dom_sf"/>
</dbReference>
<dbReference type="InterPro" id="IPR010232">
    <property type="entry name" value="UbiB"/>
</dbReference>
<dbReference type="InterPro" id="IPR045308">
    <property type="entry name" value="UbiB_bact"/>
</dbReference>
<dbReference type="InterPro" id="IPR050154">
    <property type="entry name" value="UbiB_kinase"/>
</dbReference>
<dbReference type="NCBIfam" id="NF003404">
    <property type="entry name" value="PRK04750.1"/>
    <property type="match status" value="1"/>
</dbReference>
<dbReference type="NCBIfam" id="TIGR01982">
    <property type="entry name" value="UbiB"/>
    <property type="match status" value="1"/>
</dbReference>
<dbReference type="PANTHER" id="PTHR10566">
    <property type="entry name" value="CHAPERONE-ACTIVITY OF BC1 COMPLEX CABC1 -RELATED"/>
    <property type="match status" value="1"/>
</dbReference>
<dbReference type="PANTHER" id="PTHR10566:SF113">
    <property type="entry name" value="PROTEIN ACTIVITY OF BC1 COMPLEX KINASE 7, CHLOROPLASTIC"/>
    <property type="match status" value="1"/>
</dbReference>
<dbReference type="Pfam" id="PF03109">
    <property type="entry name" value="ABC1"/>
    <property type="match status" value="1"/>
</dbReference>
<dbReference type="SUPFAM" id="SSF56112">
    <property type="entry name" value="Protein kinase-like (PK-like)"/>
    <property type="match status" value="1"/>
</dbReference>
<comment type="function">
    <text evidence="1">Is probably a protein kinase regulator of UbiI activity which is involved in aerobic coenzyme Q (ubiquinone) biosynthesis.</text>
</comment>
<comment type="pathway">
    <text>Cofactor biosynthesis; ubiquinone biosynthesis [regulation].</text>
</comment>
<comment type="subcellular location">
    <subcellularLocation>
        <location evidence="1">Cell inner membrane</location>
        <topology evidence="1">Single-pass membrane protein</topology>
    </subcellularLocation>
</comment>
<comment type="similarity">
    <text evidence="1">Belongs to the ABC1 family. UbiB subfamily.</text>
</comment>
<evidence type="ECO:0000255" key="1">
    <source>
        <dbReference type="HAMAP-Rule" id="MF_00414"/>
    </source>
</evidence>
<reference key="1">
    <citation type="submission" date="2008-08" db="EMBL/GenBank/DDBJ databases">
        <title>Complete sequence of Vibrio fischeri strain MJ11.</title>
        <authorList>
            <person name="Mandel M.J."/>
            <person name="Stabb E.V."/>
            <person name="Ruby E.G."/>
            <person name="Ferriera S."/>
            <person name="Johnson J."/>
            <person name="Kravitz S."/>
            <person name="Beeson K."/>
            <person name="Sutton G."/>
            <person name="Rogers Y.-H."/>
            <person name="Friedman R."/>
            <person name="Frazier M."/>
            <person name="Venter J.C."/>
        </authorList>
    </citation>
    <scope>NUCLEOTIDE SEQUENCE [LARGE SCALE GENOMIC DNA]</scope>
    <source>
        <strain>MJ11</strain>
    </source>
</reference>
<protein>
    <recommendedName>
        <fullName evidence="1">Probable protein kinase UbiB</fullName>
        <ecNumber evidence="1">2.7.-.-</ecNumber>
    </recommendedName>
    <alternativeName>
        <fullName evidence="1">Ubiquinone biosynthesis protein UbiB</fullName>
    </alternativeName>
</protein>
<proteinExistence type="inferred from homology"/>